<dbReference type="EC" id="2.3.1.15" evidence="1"/>
<dbReference type="EC" id="2.3.1.n5" evidence="1"/>
<dbReference type="EMBL" id="CP000038">
    <property type="protein sequence ID" value="AAZ89779.1"/>
    <property type="molecule type" value="Genomic_DNA"/>
</dbReference>
<dbReference type="RefSeq" id="WP_001272796.1">
    <property type="nucleotide sequence ID" value="NC_007384.1"/>
</dbReference>
<dbReference type="SMR" id="Q3YXI3"/>
<dbReference type="GeneID" id="93778934"/>
<dbReference type="KEGG" id="ssn:SSON_3196"/>
<dbReference type="HOGENOM" id="CLU_081254_0_2_6"/>
<dbReference type="UniPathway" id="UPA00085"/>
<dbReference type="Proteomes" id="UP000002529">
    <property type="component" value="Chromosome"/>
</dbReference>
<dbReference type="GO" id="GO:0005886">
    <property type="term" value="C:plasma membrane"/>
    <property type="evidence" value="ECO:0007669"/>
    <property type="project" value="UniProtKB-SubCell"/>
</dbReference>
<dbReference type="GO" id="GO:0043772">
    <property type="term" value="F:acyl-phosphate glycerol-3-phosphate acyltransferase activity"/>
    <property type="evidence" value="ECO:0007669"/>
    <property type="project" value="InterPro"/>
</dbReference>
<dbReference type="GO" id="GO:0004366">
    <property type="term" value="F:glycerol-3-phosphate O-acyltransferase activity"/>
    <property type="evidence" value="ECO:0007669"/>
    <property type="project" value="UniProtKB-UniRule"/>
</dbReference>
<dbReference type="GO" id="GO:0008654">
    <property type="term" value="P:phospholipid biosynthetic process"/>
    <property type="evidence" value="ECO:0007669"/>
    <property type="project" value="UniProtKB-UniRule"/>
</dbReference>
<dbReference type="HAMAP" id="MF_01043">
    <property type="entry name" value="PlsY"/>
    <property type="match status" value="1"/>
</dbReference>
<dbReference type="InterPro" id="IPR003811">
    <property type="entry name" value="G3P_acylTferase_PlsY"/>
</dbReference>
<dbReference type="NCBIfam" id="TIGR00023">
    <property type="entry name" value="glycerol-3-phosphate 1-O-acyltransferase PlsY"/>
    <property type="match status" value="1"/>
</dbReference>
<dbReference type="PANTHER" id="PTHR30309:SF0">
    <property type="entry name" value="GLYCEROL-3-PHOSPHATE ACYLTRANSFERASE-RELATED"/>
    <property type="match status" value="1"/>
</dbReference>
<dbReference type="PANTHER" id="PTHR30309">
    <property type="entry name" value="INNER MEMBRANE PROTEIN YGIH"/>
    <property type="match status" value="1"/>
</dbReference>
<dbReference type="Pfam" id="PF02660">
    <property type="entry name" value="G3P_acyltransf"/>
    <property type="match status" value="1"/>
</dbReference>
<dbReference type="SMART" id="SM01207">
    <property type="entry name" value="G3P_acyltransf"/>
    <property type="match status" value="1"/>
</dbReference>
<evidence type="ECO:0000255" key="1">
    <source>
        <dbReference type="HAMAP-Rule" id="MF_01043"/>
    </source>
</evidence>
<proteinExistence type="inferred from homology"/>
<comment type="function">
    <text evidence="1">Catalyzes the transfer of an acyl group from acyl-ACP to glycerol-3-phosphate (G3P) to form lysophosphatidic acid (LPA). This enzyme can also utilize acyl-CoA as fatty acyl donor, but not acyl-PO(4).</text>
</comment>
<comment type="catalytic activity">
    <reaction evidence="1">
        <text>sn-glycerol 3-phosphate + an acyl-CoA = a 1-acyl-sn-glycero-3-phosphate + CoA</text>
        <dbReference type="Rhea" id="RHEA:15325"/>
        <dbReference type="ChEBI" id="CHEBI:57287"/>
        <dbReference type="ChEBI" id="CHEBI:57597"/>
        <dbReference type="ChEBI" id="CHEBI:57970"/>
        <dbReference type="ChEBI" id="CHEBI:58342"/>
        <dbReference type="EC" id="2.3.1.15"/>
    </reaction>
</comment>
<comment type="catalytic activity">
    <reaction evidence="1">
        <text>a fatty acyl-[ACP] + sn-glycerol 3-phosphate = a 1-acyl-sn-glycero-3-phosphate + holo-[ACP]</text>
        <dbReference type="Rhea" id="RHEA:42300"/>
        <dbReference type="Rhea" id="RHEA-COMP:9685"/>
        <dbReference type="Rhea" id="RHEA-COMP:14125"/>
        <dbReference type="ChEBI" id="CHEBI:57597"/>
        <dbReference type="ChEBI" id="CHEBI:57970"/>
        <dbReference type="ChEBI" id="CHEBI:64479"/>
        <dbReference type="ChEBI" id="CHEBI:138651"/>
        <dbReference type="EC" id="2.3.1.n5"/>
    </reaction>
</comment>
<comment type="pathway">
    <text evidence="1">Lipid metabolism; phospholipid metabolism.</text>
</comment>
<comment type="subunit">
    <text evidence="1">Probably interacts with PlsX.</text>
</comment>
<comment type="subcellular location">
    <subcellularLocation>
        <location evidence="1">Cell inner membrane</location>
        <topology evidence="1">Multi-pass membrane protein</topology>
    </subcellularLocation>
</comment>
<comment type="similarity">
    <text evidence="1">Belongs to the PlsY family.</text>
</comment>
<organism>
    <name type="scientific">Shigella sonnei (strain Ss046)</name>
    <dbReference type="NCBI Taxonomy" id="300269"/>
    <lineage>
        <taxon>Bacteria</taxon>
        <taxon>Pseudomonadati</taxon>
        <taxon>Pseudomonadota</taxon>
        <taxon>Gammaproteobacteria</taxon>
        <taxon>Enterobacterales</taxon>
        <taxon>Enterobacteriaceae</taxon>
        <taxon>Shigella</taxon>
    </lineage>
</organism>
<reference key="1">
    <citation type="journal article" date="2005" name="Nucleic Acids Res.">
        <title>Genome dynamics and diversity of Shigella species, the etiologic agents of bacillary dysentery.</title>
        <authorList>
            <person name="Yang F."/>
            <person name="Yang J."/>
            <person name="Zhang X."/>
            <person name="Chen L."/>
            <person name="Jiang Y."/>
            <person name="Yan Y."/>
            <person name="Tang X."/>
            <person name="Wang J."/>
            <person name="Xiong Z."/>
            <person name="Dong J."/>
            <person name="Xue Y."/>
            <person name="Zhu Y."/>
            <person name="Xu X."/>
            <person name="Sun L."/>
            <person name="Chen S."/>
            <person name="Nie H."/>
            <person name="Peng J."/>
            <person name="Xu J."/>
            <person name="Wang Y."/>
            <person name="Yuan Z."/>
            <person name="Wen Y."/>
            <person name="Yao Z."/>
            <person name="Shen Y."/>
            <person name="Qiang B."/>
            <person name="Hou Y."/>
            <person name="Yu J."/>
            <person name="Jin Q."/>
        </authorList>
    </citation>
    <scope>NUCLEOTIDE SEQUENCE [LARGE SCALE GENOMIC DNA]</scope>
    <source>
        <strain>Ss046</strain>
    </source>
</reference>
<accession>Q3YXI3</accession>
<keyword id="KW-0997">Cell inner membrane</keyword>
<keyword id="KW-1003">Cell membrane</keyword>
<keyword id="KW-0444">Lipid biosynthesis</keyword>
<keyword id="KW-0443">Lipid metabolism</keyword>
<keyword id="KW-0472">Membrane</keyword>
<keyword id="KW-0594">Phospholipid biosynthesis</keyword>
<keyword id="KW-1208">Phospholipid metabolism</keyword>
<keyword id="KW-1185">Reference proteome</keyword>
<keyword id="KW-0808">Transferase</keyword>
<keyword id="KW-0812">Transmembrane</keyword>
<keyword id="KW-1133">Transmembrane helix</keyword>
<gene>
    <name evidence="1" type="primary">plsY</name>
    <name type="synonym">ygiH</name>
    <name type="ordered locus">SSON_3196</name>
</gene>
<sequence>MSAIAPGMILIAYLCGSISSAILVCRLCGLPDPRTSGSGNPGATNVLRIGGKGAAVAVLIFDVLKGMLPVWGAYELGVSPFWLGLIAIAACLGHIWPVFFGFKGGKGVATAFGAIAPIGWDLTGVMAGTWLLTVLLSGYSSLGAIVSALIAPFYVWWFKPQFTFPVSMLSCLILLRHHDNIQRLWRRQETKIWTKFKRKREKDPE</sequence>
<protein>
    <recommendedName>
        <fullName evidence="1">Glycerol-3-phosphate acyltransferase</fullName>
    </recommendedName>
    <alternativeName>
        <fullName evidence="1">G3P acyltransferase</fullName>
        <shortName evidence="1">GPAT</shortName>
        <ecNumber evidence="1">2.3.1.15</ecNumber>
        <ecNumber evidence="1">2.3.1.n5</ecNumber>
    </alternativeName>
    <alternativeName>
        <fullName evidence="1">Lysophosphatidic acid synthase</fullName>
        <shortName evidence="1">LPA synthase</shortName>
    </alternativeName>
</protein>
<name>PLSY_SHISS</name>
<feature type="chain" id="PRO_0000188447" description="Glycerol-3-phosphate acyltransferase">
    <location>
        <begin position="1"/>
        <end position="205"/>
    </location>
</feature>
<feature type="topological domain" description="Periplasmic" evidence="1">
    <location>
        <begin position="1"/>
        <end position="3"/>
    </location>
</feature>
<feature type="transmembrane region" description="Helical" evidence="1">
    <location>
        <begin position="4"/>
        <end position="24"/>
    </location>
</feature>
<feature type="topological domain" description="Cytoplasmic" evidence="1">
    <location>
        <begin position="25"/>
        <end position="52"/>
    </location>
</feature>
<feature type="transmembrane region" description="Helical" evidence="1">
    <location>
        <begin position="53"/>
        <end position="73"/>
    </location>
</feature>
<feature type="topological domain" description="Periplasmic" evidence="1">
    <location>
        <begin position="74"/>
        <end position="80"/>
    </location>
</feature>
<feature type="transmembrane region" description="Helical" evidence="1">
    <location>
        <begin position="81"/>
        <end position="101"/>
    </location>
</feature>
<feature type="topological domain" description="Cytoplasmic" evidence="1">
    <location>
        <begin position="102"/>
        <end position="111"/>
    </location>
</feature>
<feature type="transmembrane region" description="Helical" evidence="1">
    <location>
        <begin position="112"/>
        <end position="132"/>
    </location>
</feature>
<feature type="topological domain" description="Periplasmic" evidence="1">
    <location>
        <begin position="133"/>
        <end position="137"/>
    </location>
</feature>
<feature type="transmembrane region" description="Helical" evidence="1">
    <location>
        <begin position="138"/>
        <end position="158"/>
    </location>
</feature>
<feature type="topological domain" description="Cytoplasmic" evidence="1">
    <location>
        <begin position="159"/>
        <end position="205"/>
    </location>
</feature>